<dbReference type="EC" id="2.7.2.3" evidence="1"/>
<dbReference type="EMBL" id="CP000932">
    <property type="protein sequence ID" value="ACM63774.1"/>
    <property type="molecule type" value="Genomic_DNA"/>
</dbReference>
<dbReference type="RefSeq" id="WP_012661157.1">
    <property type="nucleotide sequence ID" value="NC_012039.1"/>
</dbReference>
<dbReference type="SMR" id="B9KFD9"/>
<dbReference type="STRING" id="306263.Cla_0416"/>
<dbReference type="KEGG" id="cla:CLA_0416"/>
<dbReference type="PATRIC" id="fig|306263.5.peg.418"/>
<dbReference type="eggNOG" id="COG0126">
    <property type="taxonomic scope" value="Bacteria"/>
</dbReference>
<dbReference type="HOGENOM" id="CLU_025427_0_2_7"/>
<dbReference type="UniPathway" id="UPA00109">
    <property type="reaction ID" value="UER00185"/>
</dbReference>
<dbReference type="Proteomes" id="UP000007727">
    <property type="component" value="Chromosome"/>
</dbReference>
<dbReference type="GO" id="GO:0005829">
    <property type="term" value="C:cytosol"/>
    <property type="evidence" value="ECO:0007669"/>
    <property type="project" value="TreeGrafter"/>
</dbReference>
<dbReference type="GO" id="GO:0043531">
    <property type="term" value="F:ADP binding"/>
    <property type="evidence" value="ECO:0007669"/>
    <property type="project" value="TreeGrafter"/>
</dbReference>
<dbReference type="GO" id="GO:0005524">
    <property type="term" value="F:ATP binding"/>
    <property type="evidence" value="ECO:0007669"/>
    <property type="project" value="UniProtKB-KW"/>
</dbReference>
<dbReference type="GO" id="GO:0004618">
    <property type="term" value="F:phosphoglycerate kinase activity"/>
    <property type="evidence" value="ECO:0007669"/>
    <property type="project" value="UniProtKB-UniRule"/>
</dbReference>
<dbReference type="GO" id="GO:0006094">
    <property type="term" value="P:gluconeogenesis"/>
    <property type="evidence" value="ECO:0007669"/>
    <property type="project" value="TreeGrafter"/>
</dbReference>
<dbReference type="GO" id="GO:0006096">
    <property type="term" value="P:glycolytic process"/>
    <property type="evidence" value="ECO:0007669"/>
    <property type="project" value="UniProtKB-UniRule"/>
</dbReference>
<dbReference type="CDD" id="cd00318">
    <property type="entry name" value="Phosphoglycerate_kinase"/>
    <property type="match status" value="1"/>
</dbReference>
<dbReference type="FunFam" id="3.40.50.1260:FF:000003">
    <property type="entry name" value="Phosphoglycerate kinase"/>
    <property type="match status" value="1"/>
</dbReference>
<dbReference type="FunFam" id="3.40.50.1260:FF:000006">
    <property type="entry name" value="Phosphoglycerate kinase"/>
    <property type="match status" value="1"/>
</dbReference>
<dbReference type="Gene3D" id="3.40.50.1260">
    <property type="entry name" value="Phosphoglycerate kinase, N-terminal domain"/>
    <property type="match status" value="2"/>
</dbReference>
<dbReference type="HAMAP" id="MF_00145">
    <property type="entry name" value="Phosphoglyc_kinase"/>
    <property type="match status" value="1"/>
</dbReference>
<dbReference type="InterPro" id="IPR001576">
    <property type="entry name" value="Phosphoglycerate_kinase"/>
</dbReference>
<dbReference type="InterPro" id="IPR015911">
    <property type="entry name" value="Phosphoglycerate_kinase_CS"/>
</dbReference>
<dbReference type="InterPro" id="IPR015824">
    <property type="entry name" value="Phosphoglycerate_kinase_N"/>
</dbReference>
<dbReference type="InterPro" id="IPR036043">
    <property type="entry name" value="Phosphoglycerate_kinase_sf"/>
</dbReference>
<dbReference type="PANTHER" id="PTHR11406">
    <property type="entry name" value="PHOSPHOGLYCERATE KINASE"/>
    <property type="match status" value="1"/>
</dbReference>
<dbReference type="PANTHER" id="PTHR11406:SF23">
    <property type="entry name" value="PHOSPHOGLYCERATE KINASE 1, CHLOROPLASTIC-RELATED"/>
    <property type="match status" value="1"/>
</dbReference>
<dbReference type="Pfam" id="PF00162">
    <property type="entry name" value="PGK"/>
    <property type="match status" value="1"/>
</dbReference>
<dbReference type="PIRSF" id="PIRSF000724">
    <property type="entry name" value="Pgk"/>
    <property type="match status" value="1"/>
</dbReference>
<dbReference type="PRINTS" id="PR00477">
    <property type="entry name" value="PHGLYCKINASE"/>
</dbReference>
<dbReference type="SUPFAM" id="SSF53748">
    <property type="entry name" value="Phosphoglycerate kinase"/>
    <property type="match status" value="1"/>
</dbReference>
<dbReference type="PROSITE" id="PS00111">
    <property type="entry name" value="PGLYCERATE_KINASE"/>
    <property type="match status" value="1"/>
</dbReference>
<gene>
    <name evidence="1" type="primary">pgk</name>
    <name type="ordered locus">Cla_0416</name>
</gene>
<proteinExistence type="inferred from homology"/>
<keyword id="KW-0067">ATP-binding</keyword>
<keyword id="KW-0963">Cytoplasm</keyword>
<keyword id="KW-0324">Glycolysis</keyword>
<keyword id="KW-0418">Kinase</keyword>
<keyword id="KW-0547">Nucleotide-binding</keyword>
<keyword id="KW-1185">Reference proteome</keyword>
<keyword id="KW-0808">Transferase</keyword>
<feature type="chain" id="PRO_1000203328" description="Phosphoglycerate kinase">
    <location>
        <begin position="1"/>
        <end position="400"/>
    </location>
</feature>
<feature type="binding site" evidence="1">
    <location>
        <begin position="22"/>
        <end position="24"/>
    </location>
    <ligand>
        <name>substrate</name>
    </ligand>
</feature>
<feature type="binding site" evidence="1">
    <location>
        <position position="38"/>
    </location>
    <ligand>
        <name>substrate</name>
    </ligand>
</feature>
<feature type="binding site" evidence="1">
    <location>
        <begin position="61"/>
        <end position="64"/>
    </location>
    <ligand>
        <name>substrate</name>
    </ligand>
</feature>
<feature type="binding site" evidence="1">
    <location>
        <position position="119"/>
    </location>
    <ligand>
        <name>substrate</name>
    </ligand>
</feature>
<feature type="binding site" evidence="1">
    <location>
        <position position="152"/>
    </location>
    <ligand>
        <name>substrate</name>
    </ligand>
</feature>
<feature type="binding site" evidence="1">
    <location>
        <position position="205"/>
    </location>
    <ligand>
        <name>ATP</name>
        <dbReference type="ChEBI" id="CHEBI:30616"/>
    </ligand>
</feature>
<feature type="binding site" evidence="1">
    <location>
        <position position="296"/>
    </location>
    <ligand>
        <name>ATP</name>
        <dbReference type="ChEBI" id="CHEBI:30616"/>
    </ligand>
</feature>
<feature type="binding site" evidence="1">
    <location>
        <position position="327"/>
    </location>
    <ligand>
        <name>ATP</name>
        <dbReference type="ChEBI" id="CHEBI:30616"/>
    </ligand>
</feature>
<feature type="binding site" evidence="1">
    <location>
        <begin position="353"/>
        <end position="356"/>
    </location>
    <ligand>
        <name>ATP</name>
        <dbReference type="ChEBI" id="CHEBI:30616"/>
    </ligand>
</feature>
<protein>
    <recommendedName>
        <fullName evidence="1">Phosphoglycerate kinase</fullName>
        <ecNumber evidence="1">2.7.2.3</ecNumber>
    </recommendedName>
</protein>
<name>PGK_CAMLR</name>
<organism>
    <name type="scientific">Campylobacter lari (strain RM2100 / D67 / ATCC BAA-1060)</name>
    <dbReference type="NCBI Taxonomy" id="306263"/>
    <lineage>
        <taxon>Bacteria</taxon>
        <taxon>Pseudomonadati</taxon>
        <taxon>Campylobacterota</taxon>
        <taxon>Epsilonproteobacteria</taxon>
        <taxon>Campylobacterales</taxon>
        <taxon>Campylobacteraceae</taxon>
        <taxon>Campylobacter</taxon>
    </lineage>
</organism>
<comment type="catalytic activity">
    <reaction evidence="1">
        <text>(2R)-3-phosphoglycerate + ATP = (2R)-3-phospho-glyceroyl phosphate + ADP</text>
        <dbReference type="Rhea" id="RHEA:14801"/>
        <dbReference type="ChEBI" id="CHEBI:30616"/>
        <dbReference type="ChEBI" id="CHEBI:57604"/>
        <dbReference type="ChEBI" id="CHEBI:58272"/>
        <dbReference type="ChEBI" id="CHEBI:456216"/>
        <dbReference type="EC" id="2.7.2.3"/>
    </reaction>
</comment>
<comment type="pathway">
    <text evidence="1">Carbohydrate degradation; glycolysis; pyruvate from D-glyceraldehyde 3-phosphate: step 2/5.</text>
</comment>
<comment type="subunit">
    <text evidence="1">Monomer.</text>
</comment>
<comment type="subcellular location">
    <subcellularLocation>
        <location evidence="1">Cytoplasm</location>
    </subcellularLocation>
</comment>
<comment type="similarity">
    <text evidence="1">Belongs to the phosphoglycerate kinase family.</text>
</comment>
<reference key="1">
    <citation type="journal article" date="2008" name="Foodborne Pathog. Dis.">
        <title>The complete genome sequence and analysis of the human pathogen Campylobacter lari.</title>
        <authorList>
            <person name="Miller W.G."/>
            <person name="Wang G."/>
            <person name="Binnewies T.T."/>
            <person name="Parker C.T."/>
        </authorList>
    </citation>
    <scope>NUCLEOTIDE SEQUENCE [LARGE SCALE GENOMIC DNA]</scope>
    <source>
        <strain>RM2100 / D67 / ATCC BAA-1060</strain>
    </source>
</reference>
<evidence type="ECO:0000255" key="1">
    <source>
        <dbReference type="HAMAP-Rule" id="MF_00145"/>
    </source>
</evidence>
<sequence length="400" mass="43533">MSSILSIKDIDLAKKKVFIRCDFNVPQDEFLNITDDRRIRSAIPTIRYCLDNGCAVILASHLGRPKEIASKYSLEPVAKRLARLMAKDVIMAKDVIGEDAKKKASELKSSEILLLENLRFEKGETKNDENLAKELASMADVYINDAFGVCHRAHASVEAITKYFDNTHKGAGFLLQKEIEFASNLIKHPARPFVAVVGGSKVSGKLQALTNLLPKVDKLIIGGGMAFTFLKAQGYDIGNSLLEEDLIEEANKILLKGKNLGVKIYLPVDVTAAQTCSQEAVMKYTPVQEIPAGWMGLDIGPASVRLFKEALSDAQTIWWNGPMGVFEIDKFSKGSIKMSHYISESHATTVIGGGDTADVVARAGDADEMTFISTGGGASLELIEGKELPGVKPLTIKDSE</sequence>
<accession>B9KFD9</accession>